<sequence>MAYSYTERKRIRKSFGSRDSVLEVPYLLQMQKDAYTAFLQSDVAPKKRTIEGLQAAFNSAFPIVSHNGFVEMKFVEYNLAKPAFDVRECQTRGLTFASAVRAKVQLIIYDRESSTSQSKVVKEVKEQEVYMGEVPLMTEKGSFIINGTERVIVSQLHRSPGVFFEHDKGKTHSSGKLLFSARIIPYRGSWLDFEFDPKDLLFFRVDRRRKMPVSILLKAIGLTPESILANFFVNDNFRLMDSGAQMEFVSERLRGEVARFDITDKSGKVVVAKDKRVTARHTRELEQSGTKFISVPEDFLIGRVVAKNIVDPDTGEIIAKANEELTESLLKKLRSAGIQDLQCIYTNELDQGAYISQTLRTDETVDEFAARVAIYRMMRPGEPPTEDAVQALFQRLFYNPDTYDLSRVGRMKFNAKVGRDGATGPMVLSNEDILAVVKILVDLRNGKGEVDDIDHLGNRRVRCVGELAENQYRTGLARIEKAVKERLGQAEQEPLMPHDLINSKPISAALKEFFGASQLSQFMDQTNPLAEITHKRRVSALGPGGLTRERAGFEVRDVHVTHYGRVCPIETPEGPNIGLINSLALYARLNEYGFIETPYRRVADGKVTMEIDYLSAIEEGKYIIAQANAELDAEGRLIGDLVSAREKGDSTLVSAERVQYMDVSPAQIVSVAASLIPFLEHDDANRALMGANMSRQAVPVLRPEKPMVGTGIERVAAVDSGTVVTATRGGIVDYVDATRIVVRVNDAEAVAGEVGVDIYNLIKYQRSNQNTNIHQRPIVKRGDKLAKGDVVADGASTDLGEIAIGQNMLIAFMPWNGYNFEDSILINERVVAEDRYTSIHIEELVVMARDTKLGAEEITRDIPNLSEQQLNRLDESGIIYVGAEVQPGDVLVGKVTPKGETTLTPEEKLLRAIFGEKASDVKDTSLRVDQGSQGTVIDVQVFTREGIQRDKRAQQIIDDELKRYRLDLNDQLRIVEADAFDRIEKLLNGRVANGGPQKLAKGAKIDKAYLDGVEKFHWFDIRPAEDEVATQLESIKNSLEQTRHSFDLAFEEKRKKLTQGDELPAGVLKMVKVYLAVKRRLQPGDKMAGRHGNKGVVSKIVPVEDMPYMADGSTADIVLNPLGVPSRMNIGQVLEVHLGWAGKGLGQRIGDMLQQEARAAEIRTFMEEIYNSRGRKEDLTQLDDKEIVSMAQALTTGVPFATPVFDGASEQEIQDMLHLAYPEELAQRKGLTESRTQAYLYDGRTGDRFERPTTIGYMHYLKLHHLVDDKMHARSTGPYSLVTQQPLGGKAQFGGQRFGEMEVWALEAYGAAYVLQEMLTVKSDDVVGRTKVYESIVKGEHAIEAGMPESFNVLVKEIRSLGLDIELERS</sequence>
<keyword id="KW-0240">DNA-directed RNA polymerase</keyword>
<keyword id="KW-0548">Nucleotidyltransferase</keyword>
<keyword id="KW-1185">Reference proteome</keyword>
<keyword id="KW-0804">Transcription</keyword>
<keyword id="KW-0808">Transferase</keyword>
<dbReference type="EC" id="2.7.7.6" evidence="1"/>
<dbReference type="EMBL" id="CP000884">
    <property type="protein sequence ID" value="ABX33156.1"/>
    <property type="molecule type" value="Genomic_DNA"/>
</dbReference>
<dbReference type="RefSeq" id="WP_012202442.1">
    <property type="nucleotide sequence ID" value="NC_010002.1"/>
</dbReference>
<dbReference type="SMR" id="A9BR98"/>
<dbReference type="STRING" id="398578.Daci_0510"/>
<dbReference type="GeneID" id="24117882"/>
<dbReference type="KEGG" id="dac:Daci_0510"/>
<dbReference type="eggNOG" id="COG0085">
    <property type="taxonomic scope" value="Bacteria"/>
</dbReference>
<dbReference type="HOGENOM" id="CLU_000524_4_0_4"/>
<dbReference type="Proteomes" id="UP000000784">
    <property type="component" value="Chromosome"/>
</dbReference>
<dbReference type="GO" id="GO:0000428">
    <property type="term" value="C:DNA-directed RNA polymerase complex"/>
    <property type="evidence" value="ECO:0007669"/>
    <property type="project" value="UniProtKB-KW"/>
</dbReference>
<dbReference type="GO" id="GO:0003677">
    <property type="term" value="F:DNA binding"/>
    <property type="evidence" value="ECO:0007669"/>
    <property type="project" value="UniProtKB-UniRule"/>
</dbReference>
<dbReference type="GO" id="GO:0003899">
    <property type="term" value="F:DNA-directed RNA polymerase activity"/>
    <property type="evidence" value="ECO:0007669"/>
    <property type="project" value="UniProtKB-UniRule"/>
</dbReference>
<dbReference type="GO" id="GO:0032549">
    <property type="term" value="F:ribonucleoside binding"/>
    <property type="evidence" value="ECO:0007669"/>
    <property type="project" value="InterPro"/>
</dbReference>
<dbReference type="GO" id="GO:0006351">
    <property type="term" value="P:DNA-templated transcription"/>
    <property type="evidence" value="ECO:0007669"/>
    <property type="project" value="UniProtKB-UniRule"/>
</dbReference>
<dbReference type="CDD" id="cd00653">
    <property type="entry name" value="RNA_pol_B_RPB2"/>
    <property type="match status" value="1"/>
</dbReference>
<dbReference type="FunFam" id="2.40.50.100:FF:000006">
    <property type="entry name" value="DNA-directed RNA polymerase subunit beta"/>
    <property type="match status" value="1"/>
</dbReference>
<dbReference type="FunFam" id="3.90.1800.10:FF:000001">
    <property type="entry name" value="DNA-directed RNA polymerase subunit beta"/>
    <property type="match status" value="1"/>
</dbReference>
<dbReference type="Gene3D" id="2.40.50.100">
    <property type="match status" value="1"/>
</dbReference>
<dbReference type="Gene3D" id="2.40.50.150">
    <property type="match status" value="1"/>
</dbReference>
<dbReference type="Gene3D" id="3.90.1100.10">
    <property type="match status" value="2"/>
</dbReference>
<dbReference type="Gene3D" id="2.30.150.10">
    <property type="entry name" value="DNA-directed RNA polymerase, beta subunit, external 1 domain"/>
    <property type="match status" value="1"/>
</dbReference>
<dbReference type="Gene3D" id="2.40.270.10">
    <property type="entry name" value="DNA-directed RNA polymerase, subunit 2, domain 6"/>
    <property type="match status" value="2"/>
</dbReference>
<dbReference type="Gene3D" id="3.90.1800.10">
    <property type="entry name" value="RNA polymerase alpha subunit dimerisation domain"/>
    <property type="match status" value="1"/>
</dbReference>
<dbReference type="Gene3D" id="3.90.1110.10">
    <property type="entry name" value="RNA polymerase Rpb2, domain 2"/>
    <property type="match status" value="2"/>
</dbReference>
<dbReference type="HAMAP" id="MF_01321">
    <property type="entry name" value="RNApol_bact_RpoB"/>
    <property type="match status" value="1"/>
</dbReference>
<dbReference type="InterPro" id="IPR042107">
    <property type="entry name" value="DNA-dir_RNA_pol_bsu_ext_1_sf"/>
</dbReference>
<dbReference type="InterPro" id="IPR019462">
    <property type="entry name" value="DNA-dir_RNA_pol_bsu_external_1"/>
</dbReference>
<dbReference type="InterPro" id="IPR015712">
    <property type="entry name" value="DNA-dir_RNA_pol_su2"/>
</dbReference>
<dbReference type="InterPro" id="IPR007120">
    <property type="entry name" value="DNA-dir_RNAP_su2_dom"/>
</dbReference>
<dbReference type="InterPro" id="IPR037033">
    <property type="entry name" value="DNA-dir_RNAP_su2_hyb_sf"/>
</dbReference>
<dbReference type="InterPro" id="IPR010243">
    <property type="entry name" value="RNA_pol_bsu_bac"/>
</dbReference>
<dbReference type="InterPro" id="IPR007121">
    <property type="entry name" value="RNA_pol_bsu_CS"/>
</dbReference>
<dbReference type="InterPro" id="IPR007644">
    <property type="entry name" value="RNA_pol_bsu_protrusion"/>
</dbReference>
<dbReference type="InterPro" id="IPR007642">
    <property type="entry name" value="RNA_pol_Rpb2_2"/>
</dbReference>
<dbReference type="InterPro" id="IPR037034">
    <property type="entry name" value="RNA_pol_Rpb2_2_sf"/>
</dbReference>
<dbReference type="InterPro" id="IPR007645">
    <property type="entry name" value="RNA_pol_Rpb2_3"/>
</dbReference>
<dbReference type="InterPro" id="IPR007641">
    <property type="entry name" value="RNA_pol_Rpb2_7"/>
</dbReference>
<dbReference type="InterPro" id="IPR014724">
    <property type="entry name" value="RNA_pol_RPB2_OB-fold"/>
</dbReference>
<dbReference type="NCBIfam" id="NF001616">
    <property type="entry name" value="PRK00405.1"/>
    <property type="match status" value="1"/>
</dbReference>
<dbReference type="NCBIfam" id="TIGR02013">
    <property type="entry name" value="rpoB"/>
    <property type="match status" value="1"/>
</dbReference>
<dbReference type="PANTHER" id="PTHR20856">
    <property type="entry name" value="DNA-DIRECTED RNA POLYMERASE I SUBUNIT 2"/>
    <property type="match status" value="1"/>
</dbReference>
<dbReference type="Pfam" id="PF04563">
    <property type="entry name" value="RNA_pol_Rpb2_1"/>
    <property type="match status" value="1"/>
</dbReference>
<dbReference type="Pfam" id="PF04561">
    <property type="entry name" value="RNA_pol_Rpb2_2"/>
    <property type="match status" value="2"/>
</dbReference>
<dbReference type="Pfam" id="PF04565">
    <property type="entry name" value="RNA_pol_Rpb2_3"/>
    <property type="match status" value="1"/>
</dbReference>
<dbReference type="Pfam" id="PF10385">
    <property type="entry name" value="RNA_pol_Rpb2_45"/>
    <property type="match status" value="1"/>
</dbReference>
<dbReference type="Pfam" id="PF00562">
    <property type="entry name" value="RNA_pol_Rpb2_6"/>
    <property type="match status" value="1"/>
</dbReference>
<dbReference type="Pfam" id="PF04560">
    <property type="entry name" value="RNA_pol_Rpb2_7"/>
    <property type="match status" value="1"/>
</dbReference>
<dbReference type="SUPFAM" id="SSF64484">
    <property type="entry name" value="beta and beta-prime subunits of DNA dependent RNA-polymerase"/>
    <property type="match status" value="1"/>
</dbReference>
<dbReference type="PROSITE" id="PS01166">
    <property type="entry name" value="RNA_POL_BETA"/>
    <property type="match status" value="1"/>
</dbReference>
<protein>
    <recommendedName>
        <fullName evidence="1">DNA-directed RNA polymerase subunit beta</fullName>
        <shortName evidence="1">RNAP subunit beta</shortName>
        <ecNumber evidence="1">2.7.7.6</ecNumber>
    </recommendedName>
    <alternativeName>
        <fullName evidence="1">RNA polymerase subunit beta</fullName>
    </alternativeName>
    <alternativeName>
        <fullName evidence="1">Transcriptase subunit beta</fullName>
    </alternativeName>
</protein>
<organism>
    <name type="scientific">Delftia acidovorans (strain DSM 14801 / SPH-1)</name>
    <dbReference type="NCBI Taxonomy" id="398578"/>
    <lineage>
        <taxon>Bacteria</taxon>
        <taxon>Pseudomonadati</taxon>
        <taxon>Pseudomonadota</taxon>
        <taxon>Betaproteobacteria</taxon>
        <taxon>Burkholderiales</taxon>
        <taxon>Comamonadaceae</taxon>
        <taxon>Delftia</taxon>
    </lineage>
</organism>
<proteinExistence type="inferred from homology"/>
<gene>
    <name evidence="1" type="primary">rpoB</name>
    <name type="ordered locus">Daci_0510</name>
</gene>
<accession>A9BR98</accession>
<reference key="1">
    <citation type="submission" date="2007-11" db="EMBL/GenBank/DDBJ databases">
        <title>Complete sequence of Delftia acidovorans DSM 14801 / SPH-1.</title>
        <authorList>
            <person name="Copeland A."/>
            <person name="Lucas S."/>
            <person name="Lapidus A."/>
            <person name="Barry K."/>
            <person name="Glavina del Rio T."/>
            <person name="Dalin E."/>
            <person name="Tice H."/>
            <person name="Pitluck S."/>
            <person name="Lowry S."/>
            <person name="Clum A."/>
            <person name="Schmutz J."/>
            <person name="Larimer F."/>
            <person name="Land M."/>
            <person name="Hauser L."/>
            <person name="Kyrpides N."/>
            <person name="Kim E."/>
            <person name="Schleheck D."/>
            <person name="Richardson P."/>
        </authorList>
    </citation>
    <scope>NUCLEOTIDE SEQUENCE [LARGE SCALE GENOMIC DNA]</scope>
    <source>
        <strain>DSM 14801 / SPH-1</strain>
    </source>
</reference>
<comment type="function">
    <text evidence="1">DNA-dependent RNA polymerase catalyzes the transcription of DNA into RNA using the four ribonucleoside triphosphates as substrates.</text>
</comment>
<comment type="catalytic activity">
    <reaction evidence="1">
        <text>RNA(n) + a ribonucleoside 5'-triphosphate = RNA(n+1) + diphosphate</text>
        <dbReference type="Rhea" id="RHEA:21248"/>
        <dbReference type="Rhea" id="RHEA-COMP:14527"/>
        <dbReference type="Rhea" id="RHEA-COMP:17342"/>
        <dbReference type="ChEBI" id="CHEBI:33019"/>
        <dbReference type="ChEBI" id="CHEBI:61557"/>
        <dbReference type="ChEBI" id="CHEBI:140395"/>
        <dbReference type="EC" id="2.7.7.6"/>
    </reaction>
</comment>
<comment type="subunit">
    <text evidence="1">The RNAP catalytic core consists of 2 alpha, 1 beta, 1 beta' and 1 omega subunit. When a sigma factor is associated with the core the holoenzyme is formed, which can initiate transcription.</text>
</comment>
<comment type="similarity">
    <text evidence="1">Belongs to the RNA polymerase beta chain family.</text>
</comment>
<feature type="chain" id="PRO_1000141683" description="DNA-directed RNA polymerase subunit beta">
    <location>
        <begin position="1"/>
        <end position="1370"/>
    </location>
</feature>
<evidence type="ECO:0000255" key="1">
    <source>
        <dbReference type="HAMAP-Rule" id="MF_01321"/>
    </source>
</evidence>
<name>RPOB_DELAS</name>